<feature type="chain" id="PRO_1000213706" description="tRNA(Ile)-lysidine synthase">
    <location>
        <begin position="1"/>
        <end position="317"/>
    </location>
</feature>
<feature type="binding site" evidence="1">
    <location>
        <begin position="30"/>
        <end position="35"/>
    </location>
    <ligand>
        <name>ATP</name>
        <dbReference type="ChEBI" id="CHEBI:30616"/>
    </ligand>
</feature>
<dbReference type="EC" id="6.3.4.19" evidence="1"/>
<dbReference type="EMBL" id="AP006861">
    <property type="protein sequence ID" value="BAE81022.1"/>
    <property type="molecule type" value="Genomic_DNA"/>
</dbReference>
<dbReference type="RefSeq" id="WP_011457803.1">
    <property type="nucleotide sequence ID" value="NC_007899.1"/>
</dbReference>
<dbReference type="SMR" id="Q255L6"/>
<dbReference type="STRING" id="264202.CF0250"/>
<dbReference type="KEGG" id="cfe:CF0250"/>
<dbReference type="eggNOG" id="COG0037">
    <property type="taxonomic scope" value="Bacteria"/>
</dbReference>
<dbReference type="HOGENOM" id="CLU_870675_0_0_0"/>
<dbReference type="OrthoDB" id="9807403at2"/>
<dbReference type="Proteomes" id="UP000001260">
    <property type="component" value="Chromosome"/>
</dbReference>
<dbReference type="GO" id="GO:0005737">
    <property type="term" value="C:cytoplasm"/>
    <property type="evidence" value="ECO:0007669"/>
    <property type="project" value="UniProtKB-SubCell"/>
</dbReference>
<dbReference type="GO" id="GO:0005524">
    <property type="term" value="F:ATP binding"/>
    <property type="evidence" value="ECO:0007669"/>
    <property type="project" value="UniProtKB-UniRule"/>
</dbReference>
<dbReference type="GO" id="GO:0032267">
    <property type="term" value="F:tRNA(Ile)-lysidine synthase activity"/>
    <property type="evidence" value="ECO:0007669"/>
    <property type="project" value="UniProtKB-EC"/>
</dbReference>
<dbReference type="GO" id="GO:0006400">
    <property type="term" value="P:tRNA modification"/>
    <property type="evidence" value="ECO:0007669"/>
    <property type="project" value="UniProtKB-UniRule"/>
</dbReference>
<dbReference type="CDD" id="cd01992">
    <property type="entry name" value="TilS_N"/>
    <property type="match status" value="1"/>
</dbReference>
<dbReference type="Gene3D" id="3.40.50.620">
    <property type="entry name" value="HUPs"/>
    <property type="match status" value="1"/>
</dbReference>
<dbReference type="HAMAP" id="MF_01161">
    <property type="entry name" value="tRNA_Ile_lys_synt"/>
    <property type="match status" value="1"/>
</dbReference>
<dbReference type="InterPro" id="IPR014729">
    <property type="entry name" value="Rossmann-like_a/b/a_fold"/>
</dbReference>
<dbReference type="InterPro" id="IPR011063">
    <property type="entry name" value="TilS/TtcA_N"/>
</dbReference>
<dbReference type="InterPro" id="IPR012094">
    <property type="entry name" value="tRNA_Ile_lys_synt"/>
</dbReference>
<dbReference type="InterPro" id="IPR012795">
    <property type="entry name" value="tRNA_Ile_lys_synt_N"/>
</dbReference>
<dbReference type="NCBIfam" id="TIGR02432">
    <property type="entry name" value="lysidine_TilS_N"/>
    <property type="match status" value="1"/>
</dbReference>
<dbReference type="PANTHER" id="PTHR43033">
    <property type="entry name" value="TRNA(ILE)-LYSIDINE SYNTHASE-RELATED"/>
    <property type="match status" value="1"/>
</dbReference>
<dbReference type="PANTHER" id="PTHR43033:SF1">
    <property type="entry name" value="TRNA(ILE)-LYSIDINE SYNTHASE-RELATED"/>
    <property type="match status" value="1"/>
</dbReference>
<dbReference type="Pfam" id="PF01171">
    <property type="entry name" value="ATP_bind_3"/>
    <property type="match status" value="1"/>
</dbReference>
<dbReference type="SUPFAM" id="SSF52402">
    <property type="entry name" value="Adenine nucleotide alpha hydrolases-like"/>
    <property type="match status" value="1"/>
</dbReference>
<protein>
    <recommendedName>
        <fullName evidence="1">tRNA(Ile)-lysidine synthase</fullName>
        <ecNumber evidence="1">6.3.4.19</ecNumber>
    </recommendedName>
    <alternativeName>
        <fullName evidence="1">tRNA(Ile)-2-lysyl-cytidine synthase</fullName>
    </alternativeName>
    <alternativeName>
        <fullName evidence="1">tRNA(Ile)-lysidine synthetase</fullName>
    </alternativeName>
</protein>
<name>TILS_CHLFF</name>
<reference key="1">
    <citation type="journal article" date="2006" name="DNA Res.">
        <title>Genome sequence of the cat pathogen, Chlamydophila felis.</title>
        <authorList>
            <person name="Azuma Y."/>
            <person name="Hirakawa H."/>
            <person name="Yamashita A."/>
            <person name="Cai Y."/>
            <person name="Rahman M.A."/>
            <person name="Suzuki H."/>
            <person name="Mitaku S."/>
            <person name="Toh H."/>
            <person name="Goto S."/>
            <person name="Murakami T."/>
            <person name="Sugi K."/>
            <person name="Hayashi H."/>
            <person name="Fukushi H."/>
            <person name="Hattori M."/>
            <person name="Kuhara S."/>
            <person name="Shirai M."/>
        </authorList>
    </citation>
    <scope>NUCLEOTIDE SEQUENCE [LARGE SCALE GENOMIC DNA]</scope>
    <source>
        <strain>Fe/C-56</strain>
    </source>
</reference>
<organism>
    <name type="scientific">Chlamydia felis (strain Fe/C-56)</name>
    <name type="common">Chlamydophila felis</name>
    <dbReference type="NCBI Taxonomy" id="264202"/>
    <lineage>
        <taxon>Bacteria</taxon>
        <taxon>Pseudomonadati</taxon>
        <taxon>Chlamydiota</taxon>
        <taxon>Chlamydiia</taxon>
        <taxon>Chlamydiales</taxon>
        <taxon>Chlamydiaceae</taxon>
        <taxon>Chlamydia/Chlamydophila group</taxon>
        <taxon>Chlamydia</taxon>
    </lineage>
</organism>
<keyword id="KW-0067">ATP-binding</keyword>
<keyword id="KW-0963">Cytoplasm</keyword>
<keyword id="KW-0436">Ligase</keyword>
<keyword id="KW-0547">Nucleotide-binding</keyword>
<keyword id="KW-0819">tRNA processing</keyword>
<proteinExistence type="inferred from homology"/>
<accession>Q255L6</accession>
<evidence type="ECO:0000255" key="1">
    <source>
        <dbReference type="HAMAP-Rule" id="MF_01161"/>
    </source>
</evidence>
<sequence length="317" mass="36800">MLSCLLRNDKRLEVFFSSLDMKKSYLLALSGGSDSLFLLYLLKSRGVSFIAVHVDYGWRESSYREAEELELRCQAEGVPIIVDHVPPEYRTSRDQENAARRYRYALFHKVCQKKNLSGIFLAHHANDQAETVLKRVLEGAHLSNLKGMRGEVYYEGIPILRPLLHIPKIVLSRTLDAANIHYVHDITNTDERYLRARMRNKIFPWLEEIFGKNITQPLLTLAQDSEELSCYMKQQAQPFLEKIRKENTTLSLEIPKTLIEQVFLTKWVCKEFFYSAGIVASRHFLQTVYDHLNRGLPAQMRLRNKRVIVKAGVVMIE</sequence>
<comment type="function">
    <text evidence="1">Ligates lysine onto the cytidine present at position 34 of the AUA codon-specific tRNA(Ile) that contains the anticodon CAU, in an ATP-dependent manner. Cytidine is converted to lysidine, thus changing the amino acid specificity of the tRNA from methionine to isoleucine.</text>
</comment>
<comment type="catalytic activity">
    <reaction evidence="1">
        <text>cytidine(34) in tRNA(Ile2) + L-lysine + ATP = lysidine(34) in tRNA(Ile2) + AMP + diphosphate + H(+)</text>
        <dbReference type="Rhea" id="RHEA:43744"/>
        <dbReference type="Rhea" id="RHEA-COMP:10625"/>
        <dbReference type="Rhea" id="RHEA-COMP:10670"/>
        <dbReference type="ChEBI" id="CHEBI:15378"/>
        <dbReference type="ChEBI" id="CHEBI:30616"/>
        <dbReference type="ChEBI" id="CHEBI:32551"/>
        <dbReference type="ChEBI" id="CHEBI:33019"/>
        <dbReference type="ChEBI" id="CHEBI:82748"/>
        <dbReference type="ChEBI" id="CHEBI:83665"/>
        <dbReference type="ChEBI" id="CHEBI:456215"/>
        <dbReference type="EC" id="6.3.4.19"/>
    </reaction>
</comment>
<comment type="subcellular location">
    <subcellularLocation>
        <location evidence="1">Cytoplasm</location>
    </subcellularLocation>
</comment>
<comment type="domain">
    <text>The N-terminal region contains the highly conserved SGGXDS motif, predicted to be a P-loop motif involved in ATP binding.</text>
</comment>
<comment type="similarity">
    <text evidence="1">Belongs to the tRNA(Ile)-lysidine synthase family.</text>
</comment>
<gene>
    <name evidence="1" type="primary">tilS</name>
    <name type="ordered locus">CF0250</name>
</gene>